<keyword id="KW-0238">DNA-binding</keyword>
<keyword id="KW-0479">Metal-binding</keyword>
<keyword id="KW-0539">Nucleus</keyword>
<keyword id="KW-1185">Reference proteome</keyword>
<keyword id="KW-0804">Transcription</keyword>
<keyword id="KW-0805">Transcription regulation</keyword>
<keyword id="KW-0862">Zinc</keyword>
<keyword id="KW-0863">Zinc-finger</keyword>
<comment type="function">
    <text evidence="1">Transcriptional regulator that specifically binds 5'-GATA-3' or 5'-GAT-3' motifs within gene promoters.</text>
</comment>
<comment type="subcellular location">
    <subcellularLocation>
        <location evidence="4">Nucleus</location>
    </subcellularLocation>
</comment>
<comment type="similarity">
    <text evidence="4">Belongs to the type IV zinc-finger family. Class B subfamily.</text>
</comment>
<comment type="sequence caution" evidence="4">
    <conflict type="erroneous gene model prediction">
        <sequence resource="EMBL-CDS" id="AAF63824"/>
    </conflict>
</comment>
<comment type="sequence caution" evidence="4">
    <conflict type="erroneous initiation">
        <sequence resource="EMBL-CDS" id="AAM61093"/>
    </conflict>
    <text>Truncated N-terminus.</text>
</comment>
<reference key="1">
    <citation type="journal article" date="2000" name="Nature">
        <title>Sequence and analysis of chromosome 3 of the plant Arabidopsis thaliana.</title>
        <authorList>
            <person name="Salanoubat M."/>
            <person name="Lemcke K."/>
            <person name="Rieger M."/>
            <person name="Ansorge W."/>
            <person name="Unseld M."/>
            <person name="Fartmann B."/>
            <person name="Valle G."/>
            <person name="Bloecker H."/>
            <person name="Perez-Alonso M."/>
            <person name="Obermaier B."/>
            <person name="Delseny M."/>
            <person name="Boutry M."/>
            <person name="Grivell L.A."/>
            <person name="Mache R."/>
            <person name="Puigdomenech P."/>
            <person name="De Simone V."/>
            <person name="Choisne N."/>
            <person name="Artiguenave F."/>
            <person name="Robert C."/>
            <person name="Brottier P."/>
            <person name="Wincker P."/>
            <person name="Cattolico L."/>
            <person name="Weissenbach J."/>
            <person name="Saurin W."/>
            <person name="Quetier F."/>
            <person name="Schaefer M."/>
            <person name="Mueller-Auer S."/>
            <person name="Gabel C."/>
            <person name="Fuchs M."/>
            <person name="Benes V."/>
            <person name="Wurmbach E."/>
            <person name="Drzonek H."/>
            <person name="Erfle H."/>
            <person name="Jordan N."/>
            <person name="Bangert S."/>
            <person name="Wiedelmann R."/>
            <person name="Kranz H."/>
            <person name="Voss H."/>
            <person name="Holland R."/>
            <person name="Brandt P."/>
            <person name="Nyakatura G."/>
            <person name="Vezzi A."/>
            <person name="D'Angelo M."/>
            <person name="Pallavicini A."/>
            <person name="Toppo S."/>
            <person name="Simionati B."/>
            <person name="Conrad A."/>
            <person name="Hornischer K."/>
            <person name="Kauer G."/>
            <person name="Loehnert T.-H."/>
            <person name="Nordsiek G."/>
            <person name="Reichelt J."/>
            <person name="Scharfe M."/>
            <person name="Schoen O."/>
            <person name="Bargues M."/>
            <person name="Terol J."/>
            <person name="Climent J."/>
            <person name="Navarro P."/>
            <person name="Collado C."/>
            <person name="Perez-Perez A."/>
            <person name="Ottenwaelder B."/>
            <person name="Duchemin D."/>
            <person name="Cooke R."/>
            <person name="Laudie M."/>
            <person name="Berger-Llauro C."/>
            <person name="Purnelle B."/>
            <person name="Masuy D."/>
            <person name="de Haan M."/>
            <person name="Maarse A.C."/>
            <person name="Alcaraz J.-P."/>
            <person name="Cottet A."/>
            <person name="Casacuberta E."/>
            <person name="Monfort A."/>
            <person name="Argiriou A."/>
            <person name="Flores M."/>
            <person name="Liguori R."/>
            <person name="Vitale D."/>
            <person name="Mannhaupt G."/>
            <person name="Haase D."/>
            <person name="Schoof H."/>
            <person name="Rudd S."/>
            <person name="Zaccaria P."/>
            <person name="Mewes H.-W."/>
            <person name="Mayer K.F.X."/>
            <person name="Kaul S."/>
            <person name="Town C.D."/>
            <person name="Koo H.L."/>
            <person name="Tallon L.J."/>
            <person name="Jenkins J."/>
            <person name="Rooney T."/>
            <person name="Rizzo M."/>
            <person name="Walts A."/>
            <person name="Utterback T."/>
            <person name="Fujii C.Y."/>
            <person name="Shea T.P."/>
            <person name="Creasy T.H."/>
            <person name="Haas B."/>
            <person name="Maiti R."/>
            <person name="Wu D."/>
            <person name="Peterson J."/>
            <person name="Van Aken S."/>
            <person name="Pai G."/>
            <person name="Militscher J."/>
            <person name="Sellers P."/>
            <person name="Gill J.E."/>
            <person name="Feldblyum T.V."/>
            <person name="Preuss D."/>
            <person name="Lin X."/>
            <person name="Nierman W.C."/>
            <person name="Salzberg S.L."/>
            <person name="White O."/>
            <person name="Venter J.C."/>
            <person name="Fraser C.M."/>
            <person name="Kaneko T."/>
            <person name="Nakamura Y."/>
            <person name="Sato S."/>
            <person name="Kato T."/>
            <person name="Asamizu E."/>
            <person name="Sasamoto S."/>
            <person name="Kimura T."/>
            <person name="Idesawa K."/>
            <person name="Kawashima K."/>
            <person name="Kishida Y."/>
            <person name="Kiyokawa C."/>
            <person name="Kohara M."/>
            <person name="Matsumoto M."/>
            <person name="Matsuno A."/>
            <person name="Muraki A."/>
            <person name="Nakayama S."/>
            <person name="Nakazaki N."/>
            <person name="Shinpo S."/>
            <person name="Takeuchi C."/>
            <person name="Wada T."/>
            <person name="Watanabe A."/>
            <person name="Yamada M."/>
            <person name="Yasuda M."/>
            <person name="Tabata S."/>
        </authorList>
    </citation>
    <scope>NUCLEOTIDE SEQUENCE [LARGE SCALE GENOMIC DNA]</scope>
    <source>
        <strain>cv. Columbia</strain>
    </source>
</reference>
<reference key="2">
    <citation type="journal article" date="2017" name="Plant J.">
        <title>Araport11: a complete reannotation of the Arabidopsis thaliana reference genome.</title>
        <authorList>
            <person name="Cheng C.Y."/>
            <person name="Krishnakumar V."/>
            <person name="Chan A.P."/>
            <person name="Thibaud-Nissen F."/>
            <person name="Schobel S."/>
            <person name="Town C.D."/>
        </authorList>
    </citation>
    <scope>GENOME REANNOTATION</scope>
    <source>
        <strain>cv. Columbia</strain>
    </source>
</reference>
<reference key="3">
    <citation type="journal article" date="2003" name="Science">
        <title>Empirical analysis of transcriptional activity in the Arabidopsis genome.</title>
        <authorList>
            <person name="Yamada K."/>
            <person name="Lim J."/>
            <person name="Dale J.M."/>
            <person name="Chen H."/>
            <person name="Shinn P."/>
            <person name="Palm C.J."/>
            <person name="Southwick A.M."/>
            <person name="Wu H.C."/>
            <person name="Kim C.J."/>
            <person name="Nguyen M."/>
            <person name="Pham P.K."/>
            <person name="Cheuk R.F."/>
            <person name="Karlin-Newmann G."/>
            <person name="Liu S.X."/>
            <person name="Lam B."/>
            <person name="Sakano H."/>
            <person name="Wu T."/>
            <person name="Yu G."/>
            <person name="Miranda M."/>
            <person name="Quach H.L."/>
            <person name="Tripp M."/>
            <person name="Chang C.H."/>
            <person name="Lee J.M."/>
            <person name="Toriumi M.J."/>
            <person name="Chan M.M."/>
            <person name="Tang C.C."/>
            <person name="Onodera C.S."/>
            <person name="Deng J.M."/>
            <person name="Akiyama K."/>
            <person name="Ansari Y."/>
            <person name="Arakawa T."/>
            <person name="Banh J."/>
            <person name="Banno F."/>
            <person name="Bowser L."/>
            <person name="Brooks S.Y."/>
            <person name="Carninci P."/>
            <person name="Chao Q."/>
            <person name="Choy N."/>
            <person name="Enju A."/>
            <person name="Goldsmith A.D."/>
            <person name="Gurjal M."/>
            <person name="Hansen N.F."/>
            <person name="Hayashizaki Y."/>
            <person name="Johnson-Hopson C."/>
            <person name="Hsuan V.W."/>
            <person name="Iida K."/>
            <person name="Karnes M."/>
            <person name="Khan S."/>
            <person name="Koesema E."/>
            <person name="Ishida J."/>
            <person name="Jiang P.X."/>
            <person name="Jones T."/>
            <person name="Kawai J."/>
            <person name="Kamiya A."/>
            <person name="Meyers C."/>
            <person name="Nakajima M."/>
            <person name="Narusaka M."/>
            <person name="Seki M."/>
            <person name="Sakurai T."/>
            <person name="Satou M."/>
            <person name="Tamse R."/>
            <person name="Vaysberg M."/>
            <person name="Wallender E.K."/>
            <person name="Wong C."/>
            <person name="Yamamura Y."/>
            <person name="Yuan S."/>
            <person name="Shinozaki K."/>
            <person name="Davis R.W."/>
            <person name="Theologis A."/>
            <person name="Ecker J.R."/>
        </authorList>
    </citation>
    <scope>NUCLEOTIDE SEQUENCE [LARGE SCALE MRNA]</scope>
    <source>
        <strain>cv. Columbia</strain>
    </source>
</reference>
<reference key="4">
    <citation type="submission" date="2002-03" db="EMBL/GenBank/DDBJ databases">
        <title>Full-length cDNA from Arabidopsis thaliana.</title>
        <authorList>
            <person name="Brover V.V."/>
            <person name="Troukhan M.E."/>
            <person name="Alexandrov N.A."/>
            <person name="Lu Y.-P."/>
            <person name="Flavell R.B."/>
            <person name="Feldmann K.A."/>
        </authorList>
    </citation>
    <scope>NUCLEOTIDE SEQUENCE [LARGE SCALE MRNA]</scope>
</reference>
<reference key="5">
    <citation type="journal article" date="2004" name="Plant Physiol.">
        <title>The GATA family of transcription factors in Arabidopsis and rice.</title>
        <authorList>
            <person name="Reyes J.C."/>
            <person name="Muro-Pastor M.I."/>
            <person name="Florencio F.J."/>
        </authorList>
    </citation>
    <scope>GENE FAMILY ORGANIZATION</scope>
</reference>
<name>GAT15_ARATH</name>
<gene>
    <name type="primary">GATA15</name>
    <name type="ordered locus">At3g06740</name>
    <name type="ORF">F3E22.12</name>
</gene>
<accession>Q8LG10</accession>
<accession>Q8VZR1</accession>
<accession>Q9M7Y0</accession>
<feature type="chain" id="PRO_0000083445" description="GATA transcription factor 15">
    <location>
        <begin position="1"/>
        <end position="149"/>
    </location>
</feature>
<feature type="zinc finger region" description="GATA-type" evidence="2">
    <location>
        <begin position="37"/>
        <end position="91"/>
    </location>
</feature>
<feature type="region of interest" description="Disordered" evidence="3">
    <location>
        <begin position="1"/>
        <end position="41"/>
    </location>
</feature>
<feature type="region of interest" description="Disordered" evidence="3">
    <location>
        <begin position="76"/>
        <end position="102"/>
    </location>
</feature>
<feature type="compositionally biased region" description="Basic and acidic residues" evidence="3">
    <location>
        <begin position="1"/>
        <end position="10"/>
    </location>
</feature>
<feature type="sequence conflict" description="In Ref. 4; AAM61093." evidence="4" ref="4">
    <original>K</original>
    <variation>R</variation>
    <location>
        <position position="103"/>
    </location>
</feature>
<evidence type="ECO:0000250" key="1"/>
<evidence type="ECO:0000255" key="2">
    <source>
        <dbReference type="PROSITE-ProRule" id="PRU00094"/>
    </source>
</evidence>
<evidence type="ECO:0000256" key="3">
    <source>
        <dbReference type="SAM" id="MobiDB-lite"/>
    </source>
</evidence>
<evidence type="ECO:0000305" key="4"/>
<proteinExistence type="evidence at transcript level"/>
<dbReference type="EMBL" id="AC023912">
    <property type="protein sequence ID" value="AAF63824.1"/>
    <property type="status" value="ALT_SEQ"/>
    <property type="molecule type" value="Genomic_DNA"/>
</dbReference>
<dbReference type="EMBL" id="CP002686">
    <property type="protein sequence ID" value="AEE74450.1"/>
    <property type="molecule type" value="Genomic_DNA"/>
</dbReference>
<dbReference type="EMBL" id="AY063926">
    <property type="protein sequence ID" value="AAL36282.1"/>
    <property type="molecule type" value="mRNA"/>
</dbReference>
<dbReference type="EMBL" id="AY091250">
    <property type="protein sequence ID" value="AAM14189.1"/>
    <property type="molecule type" value="mRNA"/>
</dbReference>
<dbReference type="EMBL" id="AY084525">
    <property type="protein sequence ID" value="AAM61093.1"/>
    <property type="status" value="ALT_INIT"/>
    <property type="molecule type" value="mRNA"/>
</dbReference>
<dbReference type="RefSeq" id="NP_566290.1">
    <property type="nucleotide sequence ID" value="NM_111554.5"/>
</dbReference>
<dbReference type="SMR" id="Q8LG10"/>
<dbReference type="BioGRID" id="5194">
    <property type="interactions" value="1"/>
</dbReference>
<dbReference type="FunCoup" id="Q8LG10">
    <property type="interactions" value="410"/>
</dbReference>
<dbReference type="STRING" id="3702.Q8LG10"/>
<dbReference type="PaxDb" id="3702-AT3G06740.1"/>
<dbReference type="ProteomicsDB" id="230483"/>
<dbReference type="EnsemblPlants" id="AT3G06740.1">
    <property type="protein sequence ID" value="AT3G06740.1"/>
    <property type="gene ID" value="AT3G06740"/>
</dbReference>
<dbReference type="GeneID" id="819859"/>
<dbReference type="Gramene" id="AT3G06740.1">
    <property type="protein sequence ID" value="AT3G06740.1"/>
    <property type="gene ID" value="AT3G06740"/>
</dbReference>
<dbReference type="KEGG" id="ath:AT3G06740"/>
<dbReference type="Araport" id="AT3G06740"/>
<dbReference type="TAIR" id="AT3G06740">
    <property type="gene designation" value="GATA15"/>
</dbReference>
<dbReference type="eggNOG" id="KOG1601">
    <property type="taxonomic scope" value="Eukaryota"/>
</dbReference>
<dbReference type="HOGENOM" id="CLU_060197_1_1_1"/>
<dbReference type="InParanoid" id="Q8LG10"/>
<dbReference type="OMA" id="AMTTKFT"/>
<dbReference type="PhylomeDB" id="Q8LG10"/>
<dbReference type="PRO" id="PR:Q8LG10"/>
<dbReference type="Proteomes" id="UP000006548">
    <property type="component" value="Chromosome 3"/>
</dbReference>
<dbReference type="ExpressionAtlas" id="Q8LG10">
    <property type="expression patterns" value="baseline and differential"/>
</dbReference>
<dbReference type="GO" id="GO:0005634">
    <property type="term" value="C:nucleus"/>
    <property type="evidence" value="ECO:0007669"/>
    <property type="project" value="UniProtKB-SubCell"/>
</dbReference>
<dbReference type="GO" id="GO:0003700">
    <property type="term" value="F:DNA-binding transcription factor activity"/>
    <property type="evidence" value="ECO:0000250"/>
    <property type="project" value="TAIR"/>
</dbReference>
<dbReference type="GO" id="GO:0000976">
    <property type="term" value="F:transcription cis-regulatory region binding"/>
    <property type="evidence" value="ECO:0000353"/>
    <property type="project" value="TAIR"/>
</dbReference>
<dbReference type="GO" id="GO:0008270">
    <property type="term" value="F:zinc ion binding"/>
    <property type="evidence" value="ECO:0007669"/>
    <property type="project" value="UniProtKB-KW"/>
</dbReference>
<dbReference type="CDD" id="cd00202">
    <property type="entry name" value="ZnF_GATA"/>
    <property type="match status" value="1"/>
</dbReference>
<dbReference type="FunFam" id="3.30.50.10:FF:000106">
    <property type="entry name" value="GATA transcription factor 15"/>
    <property type="match status" value="1"/>
</dbReference>
<dbReference type="Gene3D" id="3.30.50.10">
    <property type="entry name" value="Erythroid Transcription Factor GATA-1, subunit A"/>
    <property type="match status" value="1"/>
</dbReference>
<dbReference type="InterPro" id="IPR000679">
    <property type="entry name" value="Znf_GATA"/>
</dbReference>
<dbReference type="InterPro" id="IPR013088">
    <property type="entry name" value="Znf_NHR/GATA"/>
</dbReference>
<dbReference type="PANTHER" id="PTHR47172:SF1">
    <property type="entry name" value="GATA TRANSCRIPTION FACTOR 15"/>
    <property type="match status" value="1"/>
</dbReference>
<dbReference type="PANTHER" id="PTHR47172">
    <property type="entry name" value="OS01G0976800 PROTEIN"/>
    <property type="match status" value="1"/>
</dbReference>
<dbReference type="Pfam" id="PF00320">
    <property type="entry name" value="GATA"/>
    <property type="match status" value="1"/>
</dbReference>
<dbReference type="SMART" id="SM00401">
    <property type="entry name" value="ZnF_GATA"/>
    <property type="match status" value="1"/>
</dbReference>
<dbReference type="SUPFAM" id="SSF57716">
    <property type="entry name" value="Glucocorticoid receptor-like (DNA-binding domain)"/>
    <property type="match status" value="1"/>
</dbReference>
<dbReference type="PROSITE" id="PS00344">
    <property type="entry name" value="GATA_ZN_FINGER_1"/>
    <property type="match status" value="1"/>
</dbReference>
<dbReference type="PROSITE" id="PS50114">
    <property type="entry name" value="GATA_ZN_FINGER_2"/>
    <property type="match status" value="1"/>
</dbReference>
<organism>
    <name type="scientific">Arabidopsis thaliana</name>
    <name type="common">Mouse-ear cress</name>
    <dbReference type="NCBI Taxonomy" id="3702"/>
    <lineage>
        <taxon>Eukaryota</taxon>
        <taxon>Viridiplantae</taxon>
        <taxon>Streptophyta</taxon>
        <taxon>Embryophyta</taxon>
        <taxon>Tracheophyta</taxon>
        <taxon>Spermatophyta</taxon>
        <taxon>Magnoliopsida</taxon>
        <taxon>eudicotyledons</taxon>
        <taxon>Gunneridae</taxon>
        <taxon>Pentapetalae</taxon>
        <taxon>rosids</taxon>
        <taxon>malvids</taxon>
        <taxon>Brassicales</taxon>
        <taxon>Brassicaceae</taxon>
        <taxon>Camelineae</taxon>
        <taxon>Arabidopsis</taxon>
    </lineage>
</organism>
<protein>
    <recommendedName>
        <fullName>GATA transcription factor 15</fullName>
    </recommendedName>
</protein>
<sequence length="149" mass="16563">MLDPTEKVIDSESMESKLTSVDAIEEHSSSSSNEAISNEKKSCAICGTSKTPLWRGGPAGPKSLCNACGIRNRKKRRTLISNRSEDKKKKSHNRNPKFGDSLKQRLMELGREVMMQRSTAENQRRNKLGEEEQAAVLLMALSYASSVYA</sequence>